<gene>
    <name evidence="1" type="primary">trmD</name>
    <name type="ordered locus">CLL_A1249</name>
</gene>
<evidence type="ECO:0000255" key="1">
    <source>
        <dbReference type="HAMAP-Rule" id="MF_00605"/>
    </source>
</evidence>
<protein>
    <recommendedName>
        <fullName evidence="1">tRNA (guanine-N(1)-)-methyltransferase</fullName>
        <ecNumber evidence="1">2.1.1.228</ecNumber>
    </recommendedName>
    <alternativeName>
        <fullName evidence="1">M1G-methyltransferase</fullName>
    </alternativeName>
    <alternativeName>
        <fullName evidence="1">tRNA [GM37] methyltransferase</fullName>
    </alternativeName>
</protein>
<sequence>MKISILTLFPEMFSIFNHSIIGRAQENNIVELELLNIRDNTLDKHKKVDDYPYGGGAGMVMAPQPIIDTIRKAKENNKGKVIFLGPRGKTFNQKMAMDLSKEENLIFLCGHYEGIDERVYKHIDMEVSLGDFILTGGEMAAIPVIDSILRLIPGVLGKEESFVDESFSEDLLEYPQYTRPYEFEGEHVPEILLSGHHENIRKWRRLQSLDLTRKRRPDLYKNVILTKEDKKLLGRKNK</sequence>
<dbReference type="EC" id="2.1.1.228" evidence="1"/>
<dbReference type="EMBL" id="CP001056">
    <property type="protein sequence ID" value="ACD23339.1"/>
    <property type="molecule type" value="Genomic_DNA"/>
</dbReference>
<dbReference type="SMR" id="B2TJ31"/>
<dbReference type="KEGG" id="cbk:CLL_A1249"/>
<dbReference type="HOGENOM" id="CLU_047363_0_1_9"/>
<dbReference type="Proteomes" id="UP000001195">
    <property type="component" value="Chromosome"/>
</dbReference>
<dbReference type="GO" id="GO:0005829">
    <property type="term" value="C:cytosol"/>
    <property type="evidence" value="ECO:0007669"/>
    <property type="project" value="TreeGrafter"/>
</dbReference>
<dbReference type="GO" id="GO:0052906">
    <property type="term" value="F:tRNA (guanine(37)-N1)-methyltransferase activity"/>
    <property type="evidence" value="ECO:0007669"/>
    <property type="project" value="UniProtKB-UniRule"/>
</dbReference>
<dbReference type="GO" id="GO:0002939">
    <property type="term" value="P:tRNA N1-guanine methylation"/>
    <property type="evidence" value="ECO:0007669"/>
    <property type="project" value="TreeGrafter"/>
</dbReference>
<dbReference type="CDD" id="cd18080">
    <property type="entry name" value="TrmD-like"/>
    <property type="match status" value="1"/>
</dbReference>
<dbReference type="FunFam" id="1.10.1270.20:FF:000001">
    <property type="entry name" value="tRNA (guanine-N(1)-)-methyltransferase"/>
    <property type="match status" value="1"/>
</dbReference>
<dbReference type="FunFam" id="3.40.1280.10:FF:000001">
    <property type="entry name" value="tRNA (guanine-N(1)-)-methyltransferase"/>
    <property type="match status" value="1"/>
</dbReference>
<dbReference type="Gene3D" id="3.40.1280.10">
    <property type="match status" value="1"/>
</dbReference>
<dbReference type="Gene3D" id="1.10.1270.20">
    <property type="entry name" value="tRNA(m1g37)methyltransferase, domain 2"/>
    <property type="match status" value="1"/>
</dbReference>
<dbReference type="HAMAP" id="MF_00605">
    <property type="entry name" value="TrmD"/>
    <property type="match status" value="1"/>
</dbReference>
<dbReference type="InterPro" id="IPR029028">
    <property type="entry name" value="Alpha/beta_knot_MTases"/>
</dbReference>
<dbReference type="InterPro" id="IPR023148">
    <property type="entry name" value="tRNA_m1G_MeTrfase_C_sf"/>
</dbReference>
<dbReference type="InterPro" id="IPR002649">
    <property type="entry name" value="tRNA_m1G_MeTrfase_TrmD"/>
</dbReference>
<dbReference type="InterPro" id="IPR029026">
    <property type="entry name" value="tRNA_m1G_MTases_N"/>
</dbReference>
<dbReference type="InterPro" id="IPR016009">
    <property type="entry name" value="tRNA_MeTrfase_TRMD/TRM10"/>
</dbReference>
<dbReference type="NCBIfam" id="NF000648">
    <property type="entry name" value="PRK00026.1"/>
    <property type="match status" value="1"/>
</dbReference>
<dbReference type="NCBIfam" id="TIGR00088">
    <property type="entry name" value="trmD"/>
    <property type="match status" value="1"/>
</dbReference>
<dbReference type="PANTHER" id="PTHR46417">
    <property type="entry name" value="TRNA (GUANINE-N(1)-)-METHYLTRANSFERASE"/>
    <property type="match status" value="1"/>
</dbReference>
<dbReference type="PANTHER" id="PTHR46417:SF1">
    <property type="entry name" value="TRNA (GUANINE-N(1)-)-METHYLTRANSFERASE"/>
    <property type="match status" value="1"/>
</dbReference>
<dbReference type="Pfam" id="PF01746">
    <property type="entry name" value="tRNA_m1G_MT"/>
    <property type="match status" value="1"/>
</dbReference>
<dbReference type="PIRSF" id="PIRSF000386">
    <property type="entry name" value="tRNA_mtase"/>
    <property type="match status" value="1"/>
</dbReference>
<dbReference type="SUPFAM" id="SSF75217">
    <property type="entry name" value="alpha/beta knot"/>
    <property type="match status" value="1"/>
</dbReference>
<feature type="chain" id="PRO_1000130151" description="tRNA (guanine-N(1)-)-methyltransferase">
    <location>
        <begin position="1"/>
        <end position="238"/>
    </location>
</feature>
<feature type="binding site" evidence="1">
    <location>
        <position position="110"/>
    </location>
    <ligand>
        <name>S-adenosyl-L-methionine</name>
        <dbReference type="ChEBI" id="CHEBI:59789"/>
    </ligand>
</feature>
<feature type="binding site" evidence="1">
    <location>
        <begin position="129"/>
        <end position="134"/>
    </location>
    <ligand>
        <name>S-adenosyl-L-methionine</name>
        <dbReference type="ChEBI" id="CHEBI:59789"/>
    </ligand>
</feature>
<name>TRMD_CLOBB</name>
<keyword id="KW-0963">Cytoplasm</keyword>
<keyword id="KW-0489">Methyltransferase</keyword>
<keyword id="KW-0949">S-adenosyl-L-methionine</keyword>
<keyword id="KW-0808">Transferase</keyword>
<keyword id="KW-0819">tRNA processing</keyword>
<organism>
    <name type="scientific">Clostridium botulinum (strain Eklund 17B / Type B)</name>
    <dbReference type="NCBI Taxonomy" id="935198"/>
    <lineage>
        <taxon>Bacteria</taxon>
        <taxon>Bacillati</taxon>
        <taxon>Bacillota</taxon>
        <taxon>Clostridia</taxon>
        <taxon>Eubacteriales</taxon>
        <taxon>Clostridiaceae</taxon>
        <taxon>Clostridium</taxon>
    </lineage>
</organism>
<accession>B2TJ31</accession>
<reference key="1">
    <citation type="submission" date="2008-04" db="EMBL/GenBank/DDBJ databases">
        <title>Complete sequence of Clostridium botulinum strain Eklund.</title>
        <authorList>
            <person name="Brinkac L.M."/>
            <person name="Brown J.L."/>
            <person name="Bruce D."/>
            <person name="Detter C."/>
            <person name="Munk C."/>
            <person name="Smith L.A."/>
            <person name="Smith T.J."/>
            <person name="Sutton G."/>
            <person name="Brettin T.S."/>
        </authorList>
    </citation>
    <scope>NUCLEOTIDE SEQUENCE [LARGE SCALE GENOMIC DNA]</scope>
    <source>
        <strain>Eklund 17B / Type B</strain>
    </source>
</reference>
<comment type="function">
    <text evidence="1">Specifically methylates guanosine-37 in various tRNAs.</text>
</comment>
<comment type="catalytic activity">
    <reaction evidence="1">
        <text>guanosine(37) in tRNA + S-adenosyl-L-methionine = N(1)-methylguanosine(37) in tRNA + S-adenosyl-L-homocysteine + H(+)</text>
        <dbReference type="Rhea" id="RHEA:36899"/>
        <dbReference type="Rhea" id="RHEA-COMP:10145"/>
        <dbReference type="Rhea" id="RHEA-COMP:10147"/>
        <dbReference type="ChEBI" id="CHEBI:15378"/>
        <dbReference type="ChEBI" id="CHEBI:57856"/>
        <dbReference type="ChEBI" id="CHEBI:59789"/>
        <dbReference type="ChEBI" id="CHEBI:73542"/>
        <dbReference type="ChEBI" id="CHEBI:74269"/>
        <dbReference type="EC" id="2.1.1.228"/>
    </reaction>
</comment>
<comment type="subunit">
    <text evidence="1">Homodimer.</text>
</comment>
<comment type="subcellular location">
    <subcellularLocation>
        <location evidence="1">Cytoplasm</location>
    </subcellularLocation>
</comment>
<comment type="similarity">
    <text evidence="1">Belongs to the RNA methyltransferase TrmD family.</text>
</comment>
<proteinExistence type="inferred from homology"/>